<reference key="1">
    <citation type="journal article" date="2003" name="Proc. Natl. Acad. Sci. U.S.A.">
        <title>The complete genome sequence of the Arabidopsis and tomato pathogen Pseudomonas syringae pv. tomato DC3000.</title>
        <authorList>
            <person name="Buell C.R."/>
            <person name="Joardar V."/>
            <person name="Lindeberg M."/>
            <person name="Selengut J."/>
            <person name="Paulsen I.T."/>
            <person name="Gwinn M.L."/>
            <person name="Dodson R.J."/>
            <person name="DeBoy R.T."/>
            <person name="Durkin A.S."/>
            <person name="Kolonay J.F."/>
            <person name="Madupu R."/>
            <person name="Daugherty S.C."/>
            <person name="Brinkac L.M."/>
            <person name="Beanan M.J."/>
            <person name="Haft D.H."/>
            <person name="Nelson W.C."/>
            <person name="Davidsen T.M."/>
            <person name="Zafar N."/>
            <person name="Zhou L."/>
            <person name="Liu J."/>
            <person name="Yuan Q."/>
            <person name="Khouri H.M."/>
            <person name="Fedorova N.B."/>
            <person name="Tran B."/>
            <person name="Russell D."/>
            <person name="Berry K.J."/>
            <person name="Utterback T.R."/>
            <person name="Van Aken S.E."/>
            <person name="Feldblyum T.V."/>
            <person name="D'Ascenzo M."/>
            <person name="Deng W.-L."/>
            <person name="Ramos A.R."/>
            <person name="Alfano J.R."/>
            <person name="Cartinhour S."/>
            <person name="Chatterjee A.K."/>
            <person name="Delaney T.P."/>
            <person name="Lazarowitz S.G."/>
            <person name="Martin G.B."/>
            <person name="Schneider D.J."/>
            <person name="Tang X."/>
            <person name="Bender C.L."/>
            <person name="White O."/>
            <person name="Fraser C.M."/>
            <person name="Collmer A."/>
        </authorList>
    </citation>
    <scope>NUCLEOTIDE SEQUENCE [LARGE SCALE GENOMIC DNA]</scope>
    <source>
        <strain>ATCC BAA-871 / DC3000</strain>
    </source>
</reference>
<comment type="function">
    <text evidence="1">Oxidative deamination of D-amino acids.</text>
</comment>
<comment type="catalytic activity">
    <reaction evidence="1">
        <text>a D-alpha-amino acid + A + H2O = a 2-oxocarboxylate + AH2 + NH4(+)</text>
        <dbReference type="Rhea" id="RHEA:18125"/>
        <dbReference type="ChEBI" id="CHEBI:13193"/>
        <dbReference type="ChEBI" id="CHEBI:15377"/>
        <dbReference type="ChEBI" id="CHEBI:17499"/>
        <dbReference type="ChEBI" id="CHEBI:28938"/>
        <dbReference type="ChEBI" id="CHEBI:35179"/>
        <dbReference type="ChEBI" id="CHEBI:59871"/>
    </reaction>
</comment>
<comment type="cofactor">
    <cofactor evidence="1">
        <name>FAD</name>
        <dbReference type="ChEBI" id="CHEBI:57692"/>
    </cofactor>
</comment>
<comment type="similarity">
    <text evidence="1">Belongs to the DadA oxidoreductase family.</text>
</comment>
<evidence type="ECO:0000255" key="1">
    <source>
        <dbReference type="HAMAP-Rule" id="MF_01202"/>
    </source>
</evidence>
<keyword id="KW-0274">FAD</keyword>
<keyword id="KW-0285">Flavoprotein</keyword>
<keyword id="KW-0560">Oxidoreductase</keyword>
<keyword id="KW-1185">Reference proteome</keyword>
<organism>
    <name type="scientific">Pseudomonas syringae pv. tomato (strain ATCC BAA-871 / DC3000)</name>
    <dbReference type="NCBI Taxonomy" id="223283"/>
    <lineage>
        <taxon>Bacteria</taxon>
        <taxon>Pseudomonadati</taxon>
        <taxon>Pseudomonadota</taxon>
        <taxon>Gammaproteobacteria</taxon>
        <taxon>Pseudomonadales</taxon>
        <taxon>Pseudomonadaceae</taxon>
        <taxon>Pseudomonas</taxon>
    </lineage>
</organism>
<dbReference type="EC" id="1.4.99.-" evidence="1"/>
<dbReference type="EMBL" id="AE016853">
    <property type="protein sequence ID" value="AAO53655.1"/>
    <property type="molecule type" value="Genomic_DNA"/>
</dbReference>
<dbReference type="RefSeq" id="NP_789960.1">
    <property type="nucleotide sequence ID" value="NC_004578.1"/>
</dbReference>
<dbReference type="RefSeq" id="WP_005769533.1">
    <property type="nucleotide sequence ID" value="NC_004578.1"/>
</dbReference>
<dbReference type="SMR" id="Q88BB6"/>
<dbReference type="STRING" id="223283.PSPTO_0101"/>
<dbReference type="GeneID" id="1181709"/>
<dbReference type="KEGG" id="pst:PSPTO_0101"/>
<dbReference type="PATRIC" id="fig|223283.9.peg.106"/>
<dbReference type="eggNOG" id="COG0665">
    <property type="taxonomic scope" value="Bacteria"/>
</dbReference>
<dbReference type="HOGENOM" id="CLU_007884_9_2_6"/>
<dbReference type="OrthoDB" id="9805337at2"/>
<dbReference type="PhylomeDB" id="Q88BB6"/>
<dbReference type="Proteomes" id="UP000002515">
    <property type="component" value="Chromosome"/>
</dbReference>
<dbReference type="GO" id="GO:0005737">
    <property type="term" value="C:cytoplasm"/>
    <property type="evidence" value="ECO:0007669"/>
    <property type="project" value="TreeGrafter"/>
</dbReference>
<dbReference type="GO" id="GO:0005886">
    <property type="term" value="C:plasma membrane"/>
    <property type="evidence" value="ECO:0007669"/>
    <property type="project" value="TreeGrafter"/>
</dbReference>
<dbReference type="GO" id="GO:0008718">
    <property type="term" value="F:D-amino-acid dehydrogenase activity"/>
    <property type="evidence" value="ECO:0007669"/>
    <property type="project" value="UniProtKB-UniRule"/>
</dbReference>
<dbReference type="GO" id="GO:0055130">
    <property type="term" value="P:D-alanine catabolic process"/>
    <property type="evidence" value="ECO:0007669"/>
    <property type="project" value="TreeGrafter"/>
</dbReference>
<dbReference type="FunFam" id="3.50.50.60:FF:000020">
    <property type="entry name" value="D-amino acid dehydrogenase"/>
    <property type="match status" value="1"/>
</dbReference>
<dbReference type="Gene3D" id="3.30.9.10">
    <property type="entry name" value="D-Amino Acid Oxidase, subunit A, domain 2"/>
    <property type="match status" value="1"/>
</dbReference>
<dbReference type="Gene3D" id="3.50.50.60">
    <property type="entry name" value="FAD/NAD(P)-binding domain"/>
    <property type="match status" value="2"/>
</dbReference>
<dbReference type="HAMAP" id="MF_01202">
    <property type="entry name" value="DadA"/>
    <property type="match status" value="1"/>
</dbReference>
<dbReference type="InterPro" id="IPR023080">
    <property type="entry name" value="DadA"/>
</dbReference>
<dbReference type="InterPro" id="IPR006076">
    <property type="entry name" value="FAD-dep_OxRdtase"/>
</dbReference>
<dbReference type="InterPro" id="IPR036188">
    <property type="entry name" value="FAD/NAD-bd_sf"/>
</dbReference>
<dbReference type="NCBIfam" id="NF001933">
    <property type="entry name" value="PRK00711.1"/>
    <property type="match status" value="1"/>
</dbReference>
<dbReference type="PANTHER" id="PTHR13847:SF280">
    <property type="entry name" value="D-AMINO ACID DEHYDROGENASE"/>
    <property type="match status" value="1"/>
</dbReference>
<dbReference type="PANTHER" id="PTHR13847">
    <property type="entry name" value="SARCOSINE DEHYDROGENASE-RELATED"/>
    <property type="match status" value="1"/>
</dbReference>
<dbReference type="Pfam" id="PF01266">
    <property type="entry name" value="DAO"/>
    <property type="match status" value="1"/>
</dbReference>
<dbReference type="SUPFAM" id="SSF54373">
    <property type="entry name" value="FAD-linked reductases, C-terminal domain"/>
    <property type="match status" value="1"/>
</dbReference>
<dbReference type="SUPFAM" id="SSF51905">
    <property type="entry name" value="FAD/NAD(P)-binding domain"/>
    <property type="match status" value="1"/>
</dbReference>
<protein>
    <recommendedName>
        <fullName evidence="1">D-amino acid dehydrogenase</fullName>
        <ecNumber evidence="1">1.4.99.-</ecNumber>
    </recommendedName>
</protein>
<accession>Q88BB6</accession>
<name>DADA_PSESM</name>
<feature type="chain" id="PRO_0000166142" description="D-amino acid dehydrogenase">
    <location>
        <begin position="1"/>
        <end position="433"/>
    </location>
</feature>
<feature type="binding site" evidence="1">
    <location>
        <begin position="3"/>
        <end position="17"/>
    </location>
    <ligand>
        <name>FAD</name>
        <dbReference type="ChEBI" id="CHEBI:57692"/>
    </ligand>
</feature>
<sequence>MRVLVLGSGVIGTTSAYYLARAGFQVTVVDRQPAVGMETSFANAGQVSPGYASPWAAPGVPLKAIKWLLQRHSPLAIKATADIDQYLWMAQMLRNCTANRYAVNKERMVRLSEYSRDCLDELRIETGIAYEGRSLGTTQLFRTQAQLDNAAKDIAVLEQSGVPYELLDRAGIARVEPALAGVTGILSGALRLPNDQTGDCQLFTTRLAQMAVELGVEFRYGQNIERLEHAGDTVSGVWIDGVLETADRYVLALGSYSPQLLKPLGIKAPVYPLKGYSLTVPISNPAMAPTSTILDETYKVAITRFDNRIRVGGMAEIAGFDLSLNPRRRETLEMIVGDLYPQGGDLSQASFWTGLRPTTPDGTPIVGATPLRNLFLNTGHGTLGWTMACGSGRLLADLIARKRPQISAAGLDISRYGNPQENAQHVNPAPAHQ</sequence>
<proteinExistence type="inferred from homology"/>
<gene>
    <name evidence="1" type="primary">dadA</name>
    <name type="ordered locus">PSPTO_0101</name>
</gene>